<feature type="chain" id="PRO_0000459589" description="Iron-sulfur cluster assembly protein SufC">
    <location>
        <begin position="1"/>
        <end position="365"/>
    </location>
</feature>
<feature type="domain" description="ABC transporter" evidence="2">
    <location>
        <begin position="118"/>
        <end position="364"/>
    </location>
</feature>
<feature type="binding site" evidence="3">
    <location>
        <begin position="152"/>
        <end position="159"/>
    </location>
    <ligand>
        <name>ATP</name>
        <dbReference type="ChEBI" id="CHEBI:30616"/>
    </ligand>
</feature>
<comment type="function">
    <text evidence="1">Participates in the sulfur mobilization (SUF) pathway for iron-sulfur (Fe-S) cluster biogenesis. As part of a complex consisting of SufB-SufC(2)-SufD, involved in assembly of [4Fe-4S] clusters. Exhibits ATPase activity.</text>
</comment>
<comment type="catalytic activity">
    <reaction evidence="1">
        <text>ATP + H2O = ADP + phosphate + H(+)</text>
        <dbReference type="Rhea" id="RHEA:13065"/>
        <dbReference type="ChEBI" id="CHEBI:15377"/>
        <dbReference type="ChEBI" id="CHEBI:15378"/>
        <dbReference type="ChEBI" id="CHEBI:30616"/>
        <dbReference type="ChEBI" id="CHEBI:43474"/>
        <dbReference type="ChEBI" id="CHEBI:456216"/>
    </reaction>
    <physiologicalReaction direction="left-to-right" evidence="1">
        <dbReference type="Rhea" id="RHEA:13066"/>
    </physiologicalReaction>
</comment>
<comment type="pathway">
    <text evidence="5">Cofactor biosynthesis; iron-sulfur cluster biosynthesis.</text>
</comment>
<comment type="subunit">
    <text evidence="1">Component of a complex composed of SufB, SufC and SufD in a stoichiometric ratio of 1:2:1. Interacts with SufB. Interacts with SufD; the interaction enhances the ATPase activity of SufC.</text>
</comment>
<comment type="subcellular location">
    <subcellularLocation>
        <location evidence="4">Plastid</location>
        <location evidence="4">Apicoplast</location>
    </subcellularLocation>
</comment>
<comment type="developmental stage">
    <text evidence="4">Expressed in trophozoites (at protein level).</text>
</comment>
<comment type="disruption phenotype">
    <text evidence="4">Repeated attempts to isolate gene deletion mutant failed, suggesting an essential role of the gene during asexual blood stage growth.</text>
</comment>
<comment type="similarity">
    <text evidence="5">Belongs to the ABC transporter superfamily. Ycf16 family.</text>
</comment>
<accession>A0A509AN56</accession>
<dbReference type="EC" id="3.6.1.-" evidence="1"/>
<dbReference type="EMBL" id="LK023125">
    <property type="protein sequence ID" value="VUC56289.1"/>
    <property type="molecule type" value="Genomic_DNA"/>
</dbReference>
<dbReference type="SMR" id="A0A509AN56"/>
<dbReference type="FunCoup" id="A0A509AN56">
    <property type="interactions" value="44"/>
</dbReference>
<dbReference type="STRING" id="5823.A0A509AN56"/>
<dbReference type="VEuPathDB" id="PlasmoDB:PBANKA_1029200"/>
<dbReference type="InParanoid" id="A0A509AN56"/>
<dbReference type="OMA" id="MAMLEPK"/>
<dbReference type="UniPathway" id="UPA00266"/>
<dbReference type="Proteomes" id="UP000074855">
    <property type="component" value="Chromosome 10"/>
</dbReference>
<dbReference type="GO" id="GO:0020011">
    <property type="term" value="C:apicoplast"/>
    <property type="evidence" value="ECO:0007669"/>
    <property type="project" value="UniProtKB-SubCell"/>
</dbReference>
<dbReference type="GO" id="GO:0051539">
    <property type="term" value="F:4 iron, 4 sulfur cluster binding"/>
    <property type="evidence" value="ECO:0007669"/>
    <property type="project" value="UniProtKB-KW"/>
</dbReference>
<dbReference type="GO" id="GO:0005524">
    <property type="term" value="F:ATP binding"/>
    <property type="evidence" value="ECO:0007669"/>
    <property type="project" value="UniProtKB-KW"/>
</dbReference>
<dbReference type="GO" id="GO:0016887">
    <property type="term" value="F:ATP hydrolysis activity"/>
    <property type="evidence" value="ECO:0007669"/>
    <property type="project" value="InterPro"/>
</dbReference>
<dbReference type="GO" id="GO:0046872">
    <property type="term" value="F:metal ion binding"/>
    <property type="evidence" value="ECO:0007669"/>
    <property type="project" value="UniProtKB-KW"/>
</dbReference>
<dbReference type="CDD" id="cd03217">
    <property type="entry name" value="ABC_FeS_Assembly"/>
    <property type="match status" value="1"/>
</dbReference>
<dbReference type="Gene3D" id="3.40.50.300">
    <property type="entry name" value="P-loop containing nucleotide triphosphate hydrolases"/>
    <property type="match status" value="1"/>
</dbReference>
<dbReference type="InterPro" id="IPR003439">
    <property type="entry name" value="ABC_transporter-like_ATP-bd"/>
</dbReference>
<dbReference type="InterPro" id="IPR017871">
    <property type="entry name" value="ABC_transporter-like_CS"/>
</dbReference>
<dbReference type="InterPro" id="IPR010230">
    <property type="entry name" value="FeS-cluster_ATPase_SufC"/>
</dbReference>
<dbReference type="InterPro" id="IPR027417">
    <property type="entry name" value="P-loop_NTPase"/>
</dbReference>
<dbReference type="NCBIfam" id="TIGR01978">
    <property type="entry name" value="sufC"/>
    <property type="match status" value="1"/>
</dbReference>
<dbReference type="PANTHER" id="PTHR43204">
    <property type="entry name" value="ABC TRANSPORTER I FAMILY MEMBER 6, CHLOROPLASTIC"/>
    <property type="match status" value="1"/>
</dbReference>
<dbReference type="PANTHER" id="PTHR43204:SF1">
    <property type="entry name" value="ABC TRANSPORTER I FAMILY MEMBER 6, CHLOROPLASTIC"/>
    <property type="match status" value="1"/>
</dbReference>
<dbReference type="Pfam" id="PF00005">
    <property type="entry name" value="ABC_tran"/>
    <property type="match status" value="1"/>
</dbReference>
<dbReference type="SUPFAM" id="SSF52540">
    <property type="entry name" value="P-loop containing nucleoside triphosphate hydrolases"/>
    <property type="match status" value="1"/>
</dbReference>
<dbReference type="PROSITE" id="PS00211">
    <property type="entry name" value="ABC_TRANSPORTER_1"/>
    <property type="match status" value="1"/>
</dbReference>
<dbReference type="PROSITE" id="PS50893">
    <property type="entry name" value="ABC_TRANSPORTER_2"/>
    <property type="match status" value="1"/>
</dbReference>
<proteinExistence type="evidence at protein level"/>
<reference evidence="7" key="1">
    <citation type="journal article" date="2014" name="BMC Biol.">
        <title>A comprehensive evaluation of rodent malaria parasite genomes and gene expression.</title>
        <authorList>
            <person name="Otto T.D."/>
            <person name="Bohme U."/>
            <person name="Jackson A.P."/>
            <person name="Hunt M."/>
            <person name="Franke-Fayard B."/>
            <person name="Hoeijmakers W.A."/>
            <person name="Religa A.A."/>
            <person name="Robertson L."/>
            <person name="Sanders M."/>
            <person name="Ogun S.A."/>
            <person name="Cunningham D."/>
            <person name="Erhart A."/>
            <person name="Billker O."/>
            <person name="Khan S.M."/>
            <person name="Stunnenberg H.G."/>
            <person name="Langhorne J."/>
            <person name="Holder A.A."/>
            <person name="Waters A.P."/>
            <person name="Newbold C.I."/>
            <person name="Pain A."/>
            <person name="Berriman M."/>
            <person name="Janse C.J."/>
        </authorList>
    </citation>
    <scope>NUCLEOTIDE SEQUENCE [LARGE SCALE GENOMIC DNA]</scope>
    <source>
        <strain evidence="7">ANKA</strain>
    </source>
</reference>
<reference evidence="5" key="2">
    <citation type="journal article" date="2014" name="PLoS ONE">
        <title>Identification of vital and dispensable sulfur utilization factors in the Plasmodium apicoplast.</title>
        <authorList>
            <person name="Haussig J.M."/>
            <person name="Matuschewski K."/>
            <person name="Kooij T.W."/>
        </authorList>
    </citation>
    <scope>SUBCELLULAR LOCATION</scope>
    <scope>DEVELOPMENTAL STAGE</scope>
    <scope>DISRUPTION PHENOTYPE</scope>
</reference>
<organism evidence="7">
    <name type="scientific">Plasmodium berghei (strain Anka)</name>
    <dbReference type="NCBI Taxonomy" id="5823"/>
    <lineage>
        <taxon>Eukaryota</taxon>
        <taxon>Sar</taxon>
        <taxon>Alveolata</taxon>
        <taxon>Apicomplexa</taxon>
        <taxon>Aconoidasida</taxon>
        <taxon>Haemosporida</taxon>
        <taxon>Plasmodiidae</taxon>
        <taxon>Plasmodium</taxon>
        <taxon>Plasmodium (Vinckeia)</taxon>
    </lineage>
</organism>
<protein>
    <recommendedName>
        <fullName evidence="5">Iron-sulfur cluster assembly protein SufC</fullName>
        <ecNumber evidence="1">3.6.1.-</ecNumber>
    </recommendedName>
</protein>
<sequence length="365" mass="42065">MRGQFWLVMSCYIITIICKLAFCIKLIENEKSIFGFKSKKKDMKKLSNIKVRNWKQKKIQQFFIINKVKNKKYNNLKKSLNMEYSNTDDQRLSLLKNLENKSKIITQSPAWNEKIPLLEINDLHAIEVEGGKEILKGINLTIYLGEKHSIMGRNGSGKSTLAKVIAGHPYFKVTKGSMKFKGLNLTDLTVNHRSLCGIFLAFQYPIELPMVKNNEFLRTALNCHRRQNNEPELSPSEFDLLMINEIKKVGLSPEFLDRPVNYGFSGGEKKRNEILQMLILKPSFCILDETDSGLDVDSFKLTSDIIQKFSNINNSFLIVTHYKKLLELLKPNYIHIMHKGKIIKTGNYSLVDKIESDGYAQFVEE</sequence>
<keyword id="KW-0004">4Fe-4S</keyword>
<keyword id="KW-0933">Apicoplast</keyword>
<keyword id="KW-0067">ATP-binding</keyword>
<keyword id="KW-0378">Hydrolase</keyword>
<keyword id="KW-0408">Iron</keyword>
<keyword id="KW-0411">Iron-sulfur</keyword>
<keyword id="KW-0479">Metal-binding</keyword>
<keyword id="KW-0547">Nucleotide-binding</keyword>
<keyword id="KW-0934">Plastid</keyword>
<keyword id="KW-1185">Reference proteome</keyword>
<name>SUFC_PLABA</name>
<gene>
    <name evidence="5" type="primary">SufC</name>
    <name evidence="6" type="ORF">PBANKA_1029200</name>
</gene>
<evidence type="ECO:0000250" key="1">
    <source>
        <dbReference type="UniProtKB" id="Q8ILW0"/>
    </source>
</evidence>
<evidence type="ECO:0000255" key="2">
    <source>
        <dbReference type="PROSITE-ProRule" id="PRU00434"/>
    </source>
</evidence>
<evidence type="ECO:0000255" key="3">
    <source>
        <dbReference type="PROSITE-ProRule" id="PRU00499"/>
    </source>
</evidence>
<evidence type="ECO:0000269" key="4">
    <source>
    </source>
</evidence>
<evidence type="ECO:0000305" key="5"/>
<evidence type="ECO:0000312" key="6">
    <source>
        <dbReference type="EMBL" id="VUC56289.1"/>
    </source>
</evidence>
<evidence type="ECO:0000312" key="7">
    <source>
        <dbReference type="Proteomes" id="UP000074855"/>
    </source>
</evidence>